<comment type="function">
    <text evidence="1">Probable ATPase of unknown function. Its presence in a non-photosynthetic plant (Epifagus virginiana) and experiments in tobacco indicate that it has an essential function which is probably not related to photosynthesis.</text>
</comment>
<comment type="subcellular location">
    <subcellularLocation>
        <location evidence="1">Plastid</location>
        <location evidence="1">Chloroplast stroma</location>
    </subcellularLocation>
</comment>
<comment type="similarity">
    <text evidence="1">Belongs to the Ycf2 family.</text>
</comment>
<evidence type="ECO:0000255" key="1">
    <source>
        <dbReference type="HAMAP-Rule" id="MF_01330"/>
    </source>
</evidence>
<accession>A6MMQ1</accession>
<dbReference type="EMBL" id="EF380353">
    <property type="protein sequence ID" value="ABR01473.1"/>
    <property type="molecule type" value="Genomic_DNA"/>
</dbReference>
<dbReference type="EMBL" id="EF380353">
    <property type="protein sequence ID" value="ABR01492.1"/>
    <property type="molecule type" value="Genomic_DNA"/>
</dbReference>
<dbReference type="GO" id="GO:0009570">
    <property type="term" value="C:chloroplast stroma"/>
    <property type="evidence" value="ECO:0007669"/>
    <property type="project" value="UniProtKB-SubCell"/>
</dbReference>
<dbReference type="GO" id="GO:0005524">
    <property type="term" value="F:ATP binding"/>
    <property type="evidence" value="ECO:0007669"/>
    <property type="project" value="UniProtKB-KW"/>
</dbReference>
<dbReference type="GO" id="GO:0016887">
    <property type="term" value="F:ATP hydrolysis activity"/>
    <property type="evidence" value="ECO:0007669"/>
    <property type="project" value="InterPro"/>
</dbReference>
<dbReference type="CDD" id="cd19505">
    <property type="entry name" value="RecA-like_Ycf2"/>
    <property type="match status" value="1"/>
</dbReference>
<dbReference type="Gene3D" id="3.40.50.300">
    <property type="entry name" value="P-loop containing nucleotide triphosphate hydrolases"/>
    <property type="match status" value="1"/>
</dbReference>
<dbReference type="HAMAP" id="MF_01330">
    <property type="entry name" value="Ycf2"/>
    <property type="match status" value="1"/>
</dbReference>
<dbReference type="InterPro" id="IPR003593">
    <property type="entry name" value="AAA+_ATPase"/>
</dbReference>
<dbReference type="InterPro" id="IPR003959">
    <property type="entry name" value="ATPase_AAA_core"/>
</dbReference>
<dbReference type="InterPro" id="IPR027417">
    <property type="entry name" value="P-loop_NTPase"/>
</dbReference>
<dbReference type="InterPro" id="IPR008543">
    <property type="entry name" value="Uncharacterised_Ycf2"/>
</dbReference>
<dbReference type="InterPro" id="IPR056777">
    <property type="entry name" value="Ycf2_N"/>
</dbReference>
<dbReference type="PANTHER" id="PTHR33078:SF51">
    <property type="entry name" value="PROTEIN TIC 214"/>
    <property type="match status" value="1"/>
</dbReference>
<dbReference type="PANTHER" id="PTHR33078">
    <property type="entry name" value="PROTEIN YCF2-RELATED"/>
    <property type="match status" value="1"/>
</dbReference>
<dbReference type="Pfam" id="PF00004">
    <property type="entry name" value="AAA"/>
    <property type="match status" value="1"/>
</dbReference>
<dbReference type="Pfam" id="PF05695">
    <property type="entry name" value="Ycf2"/>
    <property type="match status" value="1"/>
</dbReference>
<dbReference type="SMART" id="SM00382">
    <property type="entry name" value="AAA"/>
    <property type="match status" value="1"/>
</dbReference>
<dbReference type="SUPFAM" id="SSF52540">
    <property type="entry name" value="P-loop containing nucleoside triphosphate hydrolases"/>
    <property type="match status" value="1"/>
</dbReference>
<reference key="1">
    <citation type="journal article" date="2007" name="Mol. Phylogenet. Evol.">
        <title>Phylogenetic and evolutionary implications of complete chloroplast genome sequences of four early-diverging angiosperms: Buxus (Buxaceae), Chloranthus (Chloranthaceae), Dioscorea (Dioscoreaceae), and Illicium (Schisandraceae).</title>
        <authorList>
            <person name="Hansen D.R."/>
            <person name="Dastidar S.G."/>
            <person name="Cai Z."/>
            <person name="Penaflor C."/>
            <person name="Kuehl J.V."/>
            <person name="Boore J.L."/>
            <person name="Jansen R.K."/>
        </authorList>
    </citation>
    <scope>NUCLEOTIDE SEQUENCE [LARGE SCALE GENOMIC DNA]</scope>
</reference>
<feature type="chain" id="PRO_0000343769" description="Protein Ycf2">
    <location>
        <begin position="1"/>
        <end position="2260"/>
    </location>
</feature>
<feature type="binding site" evidence="1">
    <location>
        <begin position="1614"/>
        <end position="1621"/>
    </location>
    <ligand>
        <name>ATP</name>
        <dbReference type="ChEBI" id="CHEBI:30616"/>
    </ligand>
</feature>
<proteinExistence type="inferred from homology"/>
<protein>
    <recommendedName>
        <fullName evidence="1">Protein Ycf2</fullName>
    </recommendedName>
</protein>
<gene>
    <name evidence="1" type="primary">ycf2-A</name>
</gene>
<gene>
    <name evidence="1" type="primary">ycf2-B</name>
</gene>
<name>YCF2_DIOEL</name>
<geneLocation type="chloroplast"/>
<sequence>MKRHQFKSWIFELREIWREIKNSHYFLDSWIKFDSVGFFTHIFFHQERFMKLFDPRIGSILLSRDSQGSTSNRYFTIKGVVLLVVAVLISRINNRKMVERKNLYLMGLLPIPMNSIGPRNETLEESFWSSNINRLIVSLLYLPKRKKISESCFMDPQERTWVLPINKKCIMPESNRGSRWWRNRIGKRRDSSCKISNETVAGIEISFKEKDSKYLEFLFLSYTDNPIHKDHDWELFDRLSPRKKRNIINLNSGQLFEILGKDLICYLMSAFREKRPIEGEGFFKQQGAEATIQSNDIEHVSHLFSRNKWGISLQNCAQFHMWQFRQDLFVSWGKNQHESDFLRNVSRENLIWLDNVWLVNKDRFFSKVRNVLSNIQYDSTRSIFVQVTDSSQWKGFSDQSRDHFDSIRNVDSEYHTLIDQTEIQQLKERSILWDPSFLQTERTEIESDRFPKCLFGSSSMSRLFTEREKQMNNHLLPEEIEEFLGNPTRSIRSLFSDRWSELHLGSNPTERSTRDQKFWKKKQDVSFVLSRRSENKEMVDIFKIITYLQNTVSIHPISSDPGCDMVPKDEPDMDSSNKISFLNKNPFSEEGFQEMADLFTLSITEPDLVYHRGFAFSIDSYGLDEKKFLNEVFNSRDESKKKSLLVLPPLFYEENESFYRRIRKKSVRIYCGNDLEDPKLKTAVFASNNIMEAVNQYRLIRDLIQVQYRTYGYIRNVSNRFFLMNRSDRNFEYGIQRDQIGNDTLNHITIMKYMINQHLSNLKKSKWFDSLISRTERSMNRDPDAYRYKWSNGSKNFQKHLEHFISEQKNRFQVVFDRLRINQYSIDWSEAIDKQDLSKSLRFFLSKSLLFLSKSLPFLSKSLPFFFVSIGDIPIHRSEIHIYELKGPNDQLCNQLLESIGVQIVHLNKLKPFLLDDHDTSQRPKFLINGGTILPFLFKKIQKWMIDSFHTRKNRRKSFDNTDFYFSMISHDRDDWLNTVKPFHRSSLISSFYKANRLRFLNDPHHFWFYCNKRFPFYVEKTRINNYDLTYGQFLNILFIRNKIFSLCVGKKKHILLERETISPIESQVSDIFIPNDFPQSGDETYKLYKSFHFPIRSDPFVRRAIYSIADISATPLTEEQIANFERTYCQPLSDMNLFDSEGKNLHQYLSFNSNMGLIHTPCSEKYLPSGKRKKQSLCLKKCVEKRRMYRTFQRDSAFSNLSKWNLFQTYMPWLLTSTGCKYLNFTLLDTFSDPLPIPSSSQKFVSIFNDIMHGSAWPIPQKKLWAILPQWTLISEISSKCLQNLLLLSEEMIHRNNESPVLLIWTHLRSTNAREFLYSILFLLLVAGYLVRIHLLFVFRASSELQTGLEKIKSLMIPSYMIELRKLLYRYPTSELNSFWLKNLLLVALEQLGDSLEEIRGSASGGNMLLGGGPAYGIKSIRSKKKYLNINLIDLISIIPNPINRITFSRNTRHLSRTSKEIYSLIRKRKNVNGDWIDDKIESWVANSDSIDDEEREFLIQFSTLTTEKRIDQILLSLTHSDHLSKNDSGYQMIEQPGSIYLRYLVDIHKKYLMNYEFNRSCLAERRIFLAHYQTITYSQTSCGANSFHFPSHGKPFSLRLALSPSRGILVIGSIGTGRSYLVKYLATNSYVPFITVFPNKFLDDKPKGYLIDDIDIDESDDIDDDLDTELLTMTNVLTMYMTPKIDQFDITLQFELAKAMSPCIIWIPNIHDLYVNESNYLSIGLLENYLSRDCERCSTRNILVIASTHIPQKVDPALIAPNKLNTCIKIRRLLIPQRRKHFFILSYTRGFRLEKKMFHTNGFESITMGSNARDLVALINEALSSSITQKKSIIETNTIRSALHRQTWDLRSQVRSVQDHGILFYQIGRAVAQNVLLSNCPIDPISIYMKKKSRKEGDSYLYEWYFELGTSMKKLTILLYLLSCSAGSVAQDLWSSPSPGPDEKNGITSYGFVENDSDLVHGLLEVEGALVGSSRTEKDCSQFDNNRVTLLEPKNQLDMMQNGSCSIVDQRFQYEKYESEFEEGEGEGALDPQQIEEDLFNHIVWAPRIWRPCGNLFNCIERPTELGFPYWAGSFRGKQIIYHKEDELQENDSEFLQSGTMQYQTRDRSSKEQGFFRISQFIWDPADPFFFLFKDQPFVSVFSRREFFADEEMSKGLITSQTNPPTSIYKRWFIKNTQEKHFELLIHRQRWLRTNSSLSNGSFRSNTLSESYQYLSNLFLSNGTLLDQMTKTLLRKRWLFPDEMKHLIHVTGERFPIP</sequence>
<organism>
    <name type="scientific">Dioscorea elephantipes</name>
    <name type="common">Elephant's foot yam</name>
    <name type="synonym">Testudinaria elephantipes</name>
    <dbReference type="NCBI Taxonomy" id="145284"/>
    <lineage>
        <taxon>Eukaryota</taxon>
        <taxon>Viridiplantae</taxon>
        <taxon>Streptophyta</taxon>
        <taxon>Embryophyta</taxon>
        <taxon>Tracheophyta</taxon>
        <taxon>Spermatophyta</taxon>
        <taxon>Magnoliopsida</taxon>
        <taxon>Liliopsida</taxon>
        <taxon>Dioscoreales</taxon>
        <taxon>Dioscoreaceae</taxon>
        <taxon>Dioscorea</taxon>
    </lineage>
</organism>
<keyword id="KW-0067">ATP-binding</keyword>
<keyword id="KW-0150">Chloroplast</keyword>
<keyword id="KW-0547">Nucleotide-binding</keyword>
<keyword id="KW-0934">Plastid</keyword>